<evidence type="ECO:0000269" key="1">
    <source>
    </source>
</evidence>
<evidence type="ECO:0000269" key="2">
    <source>
    </source>
</evidence>
<evidence type="ECO:0000269" key="3">
    <source>
    </source>
</evidence>
<evidence type="ECO:0000269" key="4">
    <source>
    </source>
</evidence>
<evidence type="ECO:0000269" key="5">
    <source>
    </source>
</evidence>
<evidence type="ECO:0000269" key="6">
    <source>
    </source>
</evidence>
<evidence type="ECO:0000303" key="7">
    <source>
    </source>
</evidence>
<evidence type="ECO:0000303" key="8">
    <source>
    </source>
</evidence>
<evidence type="ECO:0000305" key="9"/>
<evidence type="ECO:0007829" key="10">
    <source>
        <dbReference type="PDB" id="3NYC"/>
    </source>
</evidence>
<feature type="chain" id="PRO_0000433131" description="FAD-dependent catabolic D-arginine dehydrogenase DauA">
    <location>
        <begin position="1"/>
        <end position="375"/>
    </location>
</feature>
<feature type="binding site" evidence="3 4">
    <location>
        <position position="14"/>
    </location>
    <ligand>
        <name>FAD</name>
        <dbReference type="ChEBI" id="CHEBI:57692"/>
    </ligand>
</feature>
<feature type="binding site" evidence="3 4">
    <location>
        <begin position="32"/>
        <end position="33"/>
    </location>
    <ligand>
        <name>FAD</name>
        <dbReference type="ChEBI" id="CHEBI:57692"/>
    </ligand>
</feature>
<feature type="binding site" evidence="3 4">
    <location>
        <begin position="41"/>
        <end position="48"/>
    </location>
    <ligand>
        <name>FAD</name>
        <dbReference type="ChEBI" id="CHEBI:57692"/>
    </ligand>
</feature>
<feature type="binding site" evidence="3 4">
    <location>
        <position position="171"/>
    </location>
    <ligand>
        <name>FAD</name>
        <dbReference type="ChEBI" id="CHEBI:57692"/>
    </ligand>
</feature>
<feature type="binding site" evidence="3 4">
    <location>
        <begin position="331"/>
        <end position="336"/>
    </location>
    <ligand>
        <name>FAD</name>
        <dbReference type="ChEBI" id="CHEBI:57692"/>
    </ligand>
</feature>
<feature type="site" description="Important for specificity toward positively charged substrates" evidence="3">
    <location>
        <position position="87"/>
    </location>
</feature>
<feature type="strand" evidence="10">
    <location>
        <begin position="5"/>
        <end position="9"/>
    </location>
</feature>
<feature type="helix" evidence="10">
    <location>
        <begin position="13"/>
        <end position="22"/>
    </location>
</feature>
<feature type="turn" evidence="10">
    <location>
        <begin position="23"/>
        <end position="25"/>
    </location>
</feature>
<feature type="strand" evidence="10">
    <location>
        <begin position="28"/>
        <end position="31"/>
    </location>
</feature>
<feature type="strand" evidence="10">
    <location>
        <begin position="33"/>
        <end position="36"/>
    </location>
</feature>
<feature type="helix" evidence="10">
    <location>
        <begin position="41"/>
        <end position="43"/>
    </location>
</feature>
<feature type="strand" evidence="10">
    <location>
        <begin position="51"/>
        <end position="54"/>
    </location>
</feature>
<feature type="helix" evidence="10">
    <location>
        <begin position="56"/>
        <end position="70"/>
    </location>
</feature>
<feature type="strand" evidence="10">
    <location>
        <begin position="81"/>
        <end position="84"/>
    </location>
</feature>
<feature type="strand" evidence="10">
    <location>
        <begin position="87"/>
        <end position="90"/>
    </location>
</feature>
<feature type="helix" evidence="10">
    <location>
        <begin position="96"/>
        <end position="109"/>
    </location>
</feature>
<feature type="strand" evidence="10">
    <location>
        <begin position="114"/>
        <end position="116"/>
    </location>
</feature>
<feature type="helix" evidence="10">
    <location>
        <begin position="118"/>
        <end position="124"/>
    </location>
</feature>
<feature type="helix" evidence="10">
    <location>
        <begin position="130"/>
        <end position="132"/>
    </location>
</feature>
<feature type="strand" evidence="10">
    <location>
        <begin position="136"/>
        <end position="139"/>
    </location>
</feature>
<feature type="strand" evidence="10">
    <location>
        <begin position="143"/>
        <end position="145"/>
    </location>
</feature>
<feature type="helix" evidence="10">
    <location>
        <begin position="147"/>
        <end position="160"/>
    </location>
</feature>
<feature type="strand" evidence="10">
    <location>
        <begin position="164"/>
        <end position="168"/>
    </location>
</feature>
<feature type="strand" evidence="10">
    <location>
        <begin position="173"/>
        <end position="177"/>
    </location>
</feature>
<feature type="strand" evidence="10">
    <location>
        <begin position="180"/>
        <end position="184"/>
    </location>
</feature>
<feature type="strand" evidence="10">
    <location>
        <begin position="186"/>
        <end position="197"/>
    </location>
</feature>
<feature type="helix" evidence="10">
    <location>
        <begin position="200"/>
        <end position="202"/>
    </location>
</feature>
<feature type="helix" evidence="10">
    <location>
        <begin position="203"/>
        <end position="210"/>
    </location>
</feature>
<feature type="strand" evidence="10">
    <location>
        <begin position="218"/>
        <end position="227"/>
    </location>
</feature>
<feature type="strand" evidence="10">
    <location>
        <begin position="240"/>
        <end position="243"/>
    </location>
</feature>
<feature type="strand" evidence="10">
    <location>
        <begin position="249"/>
        <end position="253"/>
    </location>
</feature>
<feature type="strand" evidence="10">
    <location>
        <begin position="256"/>
        <end position="260"/>
    </location>
</feature>
<feature type="helix" evidence="10">
    <location>
        <begin position="276"/>
        <end position="289"/>
    </location>
</feature>
<feature type="strand" evidence="10">
    <location>
        <begin position="298"/>
        <end position="307"/>
    </location>
</feature>
<feature type="strand" evidence="10">
    <location>
        <begin position="314"/>
        <end position="317"/>
    </location>
</feature>
<feature type="strand" evidence="10">
    <location>
        <begin position="324"/>
        <end position="328"/>
    </location>
</feature>
<feature type="turn" evidence="10">
    <location>
        <begin position="334"/>
        <end position="337"/>
    </location>
</feature>
<feature type="helix" evidence="10">
    <location>
        <begin position="338"/>
        <end position="349"/>
    </location>
</feature>
<feature type="helix" evidence="10">
    <location>
        <begin position="356"/>
        <end position="359"/>
    </location>
</feature>
<feature type="turn" evidence="10">
    <location>
        <begin position="360"/>
        <end position="362"/>
    </location>
</feature>
<feature type="helix" evidence="10">
    <location>
        <begin position="365"/>
        <end position="368"/>
    </location>
</feature>
<feature type="helix" evidence="10">
    <location>
        <begin position="370"/>
        <end position="373"/>
    </location>
</feature>
<reference key="1">
    <citation type="journal article" date="2000" name="Nature">
        <title>Complete genome sequence of Pseudomonas aeruginosa PAO1, an opportunistic pathogen.</title>
        <authorList>
            <person name="Stover C.K."/>
            <person name="Pham X.-Q.T."/>
            <person name="Erwin A.L."/>
            <person name="Mizoguchi S.D."/>
            <person name="Warrener P."/>
            <person name="Hickey M.J."/>
            <person name="Brinkman F.S.L."/>
            <person name="Hufnagle W.O."/>
            <person name="Kowalik D.J."/>
            <person name="Lagrou M."/>
            <person name="Garber R.L."/>
            <person name="Goltry L."/>
            <person name="Tolentino E."/>
            <person name="Westbrock-Wadman S."/>
            <person name="Yuan Y."/>
            <person name="Brody L.L."/>
            <person name="Coulter S.N."/>
            <person name="Folger K.R."/>
            <person name="Kas A."/>
            <person name="Larbig K."/>
            <person name="Lim R.M."/>
            <person name="Smith K.A."/>
            <person name="Spencer D.H."/>
            <person name="Wong G.K.-S."/>
            <person name="Wu Z."/>
            <person name="Paulsen I.T."/>
            <person name="Reizer J."/>
            <person name="Saier M.H. Jr."/>
            <person name="Hancock R.E.W."/>
            <person name="Lory S."/>
            <person name="Olson M.V."/>
        </authorList>
    </citation>
    <scope>NUCLEOTIDE SEQUENCE [LARGE SCALE GENOMIC DNA]</scope>
    <source>
        <strain>ATCC 15692 / DSM 22644 / CIP 104116 / JCM 14847 / LMG 12228 / 1C / PRS 101 / PAO1</strain>
    </source>
</reference>
<reference key="2">
    <citation type="journal article" date="1988" name="J. Gen. Microbiol.">
        <title>The fourth arginine catabolic pathway of Pseudomonas aeruginosa.</title>
        <authorList>
            <person name="Jann A."/>
            <person name="Matsumoto H."/>
            <person name="Haas D."/>
        </authorList>
    </citation>
    <scope>FUNCTION</scope>
    <scope>CATALYTIC ACTIVITY</scope>
    <scope>INDUCTION</scope>
    <scope>SUBSTRATE SPECIFICITY</scope>
    <source>
        <strain>ATCC 15692 / DSM 22644 / CIP 104116 / JCM 14847 / LMG 12228 / 1C / PRS 101 / PAO1</strain>
    </source>
</reference>
<reference key="3">
    <citation type="journal article" date="2009" name="Proc. Natl. Acad. Sci. U.S.A.">
        <title>Arginine racemization by coupled catabolic and anabolic dehydrogenases.</title>
        <authorList>
            <person name="Li C."/>
            <person name="Lu C.D."/>
        </authorList>
    </citation>
    <scope>FUNCTION</scope>
    <scope>CATALYTIC ACTIVITY</scope>
    <scope>INDUCTION</scope>
    <scope>DISRUPTION PHENOTYPE</scope>
    <scope>SUBUNIT</scope>
    <source>
        <strain>ATCC 15692 / DSM 22644 / CIP 104116 / JCM 14847 / LMG 12228 / 1C / PRS 101 / PAO1</strain>
    </source>
</reference>
<reference key="4">
    <citation type="journal article" date="2010" name="Microbiology">
        <title>Regulation of the dauBAR operon and characterization of D-amino acid dehydrogenase DauA in arginine and lysine catabolism of Pseudomonas aeruginosa PAO1.</title>
        <authorList>
            <person name="Li C."/>
            <person name="Yao X."/>
            <person name="Lu C.D."/>
        </authorList>
    </citation>
    <scope>FUNCTION</scope>
    <scope>CATALYTIC ACTIVITY</scope>
    <scope>BIOPHYSICOCHEMICAL PROPERTIES</scope>
    <scope>DISRUPTION PHENOTYPE</scope>
    <scope>ACTIVITY REGULATION</scope>
    <scope>INDUCTION</scope>
    <scope>SUBSTRATE SPECIFICITY</scope>
    <source>
        <strain>ATCC 15692 / DSM 22644 / CIP 104116 / JCM 14847 / LMG 12228 / 1C / PRS 101 / PAO1</strain>
    </source>
</reference>
<reference key="5">
    <citation type="journal article" date="2013" name="Can. J. Microbiol.">
        <title>Impact of D-amino acid dehydrogenase on virulence factor production by a Pseudomonas aeruginosa.</title>
        <authorList>
            <person name="Oliver K.E."/>
            <person name="Silo-Suh L."/>
        </authorList>
    </citation>
    <scope>FUNCTION IN VIRULENCE</scope>
</reference>
<reference key="6">
    <citation type="journal article" date="2010" name="Biochemistry">
        <title>Conformational changes and substrate recognition in Pseudomonas aeruginosa D-arginine dehydrogenase.</title>
        <authorList>
            <person name="Fu G."/>
            <person name="Yuan H."/>
            <person name="Li C."/>
            <person name="Lu C.D."/>
            <person name="Gadda G."/>
            <person name="Weber I.T."/>
        </authorList>
    </citation>
    <scope>X-RAY CRYSTALLOGRAPHY (1.06 ANGSTROMS) OF 2-375 IN COMPLEX WITH FAD</scope>
    <scope>FUNCTION</scope>
    <scope>CATALYTIC ACTIVITY</scope>
    <scope>BIOPHYSICOCHEMICAL PROPERTIES</scope>
    <scope>COFACTOR</scope>
    <scope>SUBSTRATE SPECIFICITY</scope>
</reference>
<reference key="7">
    <citation type="journal article" date="2011" name="Biochemistry">
        <title>Atomic-resolution structure of an N5 flavin adduct in D-arginine dehydrogenase.</title>
        <authorList>
            <person name="Fu G."/>
            <person name="Yuan H."/>
            <person name="Wang S."/>
            <person name="Gadda G."/>
            <person name="Weber I.T."/>
        </authorList>
    </citation>
    <scope>X-RAY CRYSTALLOGRAPHY (1.07 ANGSTROMS) OF 2-375 IN COMPLEX WITH FAD ANALOG</scope>
    <scope>COFACTOR</scope>
</reference>
<sequence length="375" mass="40567">MIEADYLVIGAGIAGASTGYWLSAHGRVVVLEREAQPGYHSTGRSAAHYTVAYGTPQVRALTAASRAFFDNPPAGFCEHPLLSPRPEMVVDFSDDPEELRRQYESGKALVPQMRLLDAEQACSIVPVLRRDKVFGATYDPTGADIDTDALHQGYLRGIRRNQGQVLCNHEALEIRRVDGAWEVRCDAGSYRAAVLVNAAGAWCDAIAGLAGVRPLGLQPKRRSAFIFAPPPGIDCHDWPMLVSLDESFYLKPDAGMLLGSPANADPVEAHDVQPEQLDIATGMYLIEEATTLTIRRPEHTWAGLRSFVADGDLVAGYAANAEGFFWVAAQGGYGIQTSAAMGEASAALIRHQPLPAHLREHGLDEAMLSPRRLSP</sequence>
<comment type="function">
    <text evidence="1 2 3 5 6">DauA is highly expressed within the cystic fibrosis (CF) lung, and it is required for virulence via the optimal production of hydrogen cyanide, pyocyanine, pyoverdine, rhamnolipid and alginate during biofilm formation (PubMed:24011342). Involved in the catabolism of D-lysine and D-arginine. Under aerobic conditions, the arginine succinyltransferase (AST) and arginine transaminase (ATA) pathways are 2 major routes for L-arginine utilization as the sole source of carbon and nitrogen. The D-to-L racemization of arginine by DauA and DauB is necessary, before to be channeled into the AST and/or ATA pathways. DauA catalyzes the flavin-dependent oxidative deamination of D-arginine into 2-ketoarginine (2-KA) and ammonia (PubMed:19139398, PubMed:19850617, PubMed:20809650, PubMed:3141581). It also has dehydrogenase activity towards D-lysine, D-tyrosine, D-methionine, D-phenylalanine, D-ornithine, D-histidine and D-leucine as substrates (PubMed:19850617, PubMed:20809650).</text>
</comment>
<comment type="catalytic activity">
    <reaction evidence="1 2 3 6">
        <text>D-arginine + A + H2O = 5-guanidino-2-oxopentanoate + AH2 + NH4(+)</text>
        <dbReference type="Rhea" id="RHEA:43572"/>
        <dbReference type="ChEBI" id="CHEBI:13193"/>
        <dbReference type="ChEBI" id="CHEBI:15377"/>
        <dbReference type="ChEBI" id="CHEBI:17499"/>
        <dbReference type="ChEBI" id="CHEBI:28938"/>
        <dbReference type="ChEBI" id="CHEBI:32689"/>
        <dbReference type="ChEBI" id="CHEBI:58489"/>
        <dbReference type="EC" id="1.4.99.6"/>
    </reaction>
</comment>
<comment type="catalytic activity">
    <reaction evidence="2 3">
        <text>a D-alpha-amino acid + A + H2O = a 2-oxocarboxylate + AH2 + NH4(+)</text>
        <dbReference type="Rhea" id="RHEA:18125"/>
        <dbReference type="ChEBI" id="CHEBI:13193"/>
        <dbReference type="ChEBI" id="CHEBI:15377"/>
        <dbReference type="ChEBI" id="CHEBI:17499"/>
        <dbReference type="ChEBI" id="CHEBI:28938"/>
        <dbReference type="ChEBI" id="CHEBI:35179"/>
        <dbReference type="ChEBI" id="CHEBI:59871"/>
    </reaction>
</comment>
<comment type="cofactor">
    <cofactor evidence="3 4">
        <name>FAD</name>
        <dbReference type="ChEBI" id="CHEBI:57692"/>
    </cofactor>
</comment>
<comment type="activity regulation">
    <text evidence="2">Inhibited by D-arginine and D-lysine at high concentration.</text>
</comment>
<comment type="biophysicochemical properties">
    <kinetics>
        <KM evidence="3">0.06 mM for D-arginine (at pH 8.7 and 25 degrees Celsius)</KM>
        <KM evidence="2">0.08 mM for D-arginine (at pH 8.7 and 37 degrees Celsius)</KM>
        <KM evidence="2">0.19 mM for D-lysine (at pH 8.7 and 37 degrees Celsius)</KM>
        <KM evidence="3">0.26 mM for D-lysine (at pH 8.7 and 25 degrees Celsius)</KM>
        <KM evidence="2">0.4 mM for D-tyrosine (at pH 8.7 and 37 degrees Celsius)</KM>
        <KM evidence="3">0.8 mM for D-tyrosine (at pH 8.7 and 25 degrees Celsius)</KM>
        <KM evidence="2">1.13 mM for D-phenylalanine (at pH 8.7 and 37 degrees Celsius)</KM>
        <KM evidence="2">1.43 mM for D-methionine (at pH 8.7 and 37 degrees Celsius)</KM>
        <KM evidence="2">1.48 mM for D-ornithine (at pH 8.7 and 37 degrees Celsius)</KM>
        <KM evidence="2">3.52 mM for D-histidine (at pH 8.7 and 37 degrees Celsius)</KM>
        <KM evidence="3">10 mM for D-methionine (at pH 8.7 and 25 degrees Celsius)</KM>
        <KM evidence="3">11 mM for D-phenylalanine (at pH 8.7 and 25 degrees Celsius)</KM>
        <KM evidence="3">11 mM for D-histidine (at pH 8.7 and 25 degrees Celsius)</KM>
        <KM evidence="3">12 mM for D-leucine (at pH 8.7 and 25 degrees Celsius)</KM>
        <text evidence="2 3">kcat is 204 sec(-1) for dehydrogenase activity with D-arginine as substrate (at pH 8.7 and 25 degrees Celsius). kcat is 154 sec(-1) for dehydrogenase activity with D-methionine as substrate (at pH 8.7 and 25 degrees Celsius). kcat is 141 sec(-1) for dehydrogenase activity with D-lysine as substrate (at pH 8.7 and 25 degrees Celsius). kcat is 75 sec(-1) for dehydrogenase activity with D-phenylalanine as substrate (at pH 8.7 and 25 degrees Celsius). kcat is 35 sec(-1) for dehydrogenase activity with D-histidine as substrate (at pH 8.7 and 25 degrees Celsius). kcat is 23 sec(-1) for dehydrogenase activity with D-tyrosine as substrate (at pH 8.7 and 25 degrees Celsius). kcat is 11.1 sec(-1) for dehydrogenase activity with D-arginine as substrate (at pH 8.7 and 37 degrees Celsius). kcat is 9.2 sec(-1) for dehydrogenase activity with D-lysine as substrate (at pH 8.7 and 37 degrees Celsius). kcat is 6.8 sec(-1) for dehydrogenase activity with D-methionine as substrate (at pH 8.7 and 37 degrees Celsius). kcat is 6.4 sec(-1) for dehydrogenase activity with D-leucine as substrate (at pH 8.7 and 25 degrees Celsius). kcat is 6.2 sec(-1) for dehydrogenase activity with D-ornithine as substrate (at pH 8.7 and 37 degrees Celsius). kcat is 5.3 sec(-1) for dehydrogenase activity with D-phenylalanine as substrate (at pH 8.7 and 37 degrees Celsius). kcat is 3.6 sec(-1) for dehydrogenase activity with D-histidine and D-tyrosine as substrates (at pH 8.7 and 37 degrees Celsius).</text>
    </kinetics>
    <phDependence>
        <text evidence="2">Optimum pH is 8.7.</text>
    </phDependence>
    <temperatureDependence>
        <text evidence="2">Optimum temperature is 37 degrees Celsius.</text>
    </temperatureDependence>
</comment>
<comment type="subunit">
    <text evidence="1">Monomer.</text>
</comment>
<comment type="induction">
    <text evidence="1 2 6">Induced by growth on D-arginine, D-lysine and 2-ketoarginine (2-KA), but not on L-arginine (PubMed:19139398, PubMed:3141581). Repressed by DauR. ArgR could be a transcriptional activator of the dauBAR operon in response to the presence of L-Arg (PubMed:19850617).</text>
</comment>
<comment type="disruption phenotype">
    <text evidence="1 2">Cells lacking this gene are unable to grow on D-arginine or D-lysine as sole nitrogen source.</text>
</comment>
<comment type="miscellaneous">
    <text evidence="1 6">In vitro, it is essential to include phenazine methosulfate (PMS) or iodonitrotetrazolium chloride (INT) as the artificial electron acceptor in the reaction to ensure DauA remains active with FAD.</text>
</comment>
<comment type="similarity">
    <text evidence="9">Belongs to the FAD-dependent glycerol-3-phosphate dehydrogenase family.</text>
</comment>
<protein>
    <recommendedName>
        <fullName evidence="8">FAD-dependent catabolic D-arginine dehydrogenase DauA</fullName>
        <ecNumber evidence="1 2 3 6">1.4.99.6</ecNumber>
    </recommendedName>
    <alternativeName>
        <fullName evidence="7">D-arginine dehydrogenase</fullName>
        <shortName evidence="7">DADH</shortName>
    </alternativeName>
    <alternativeName>
        <fullName evidence="7">D-arginine utilization protein A</fullName>
        <shortName evidence="7">Dau</shortName>
    </alternativeName>
</protein>
<proteinExistence type="evidence at protein level"/>
<accession>Q9HXE3</accession>
<dbReference type="EC" id="1.4.99.6" evidence="1 2 3 6"/>
<dbReference type="EMBL" id="AE004091">
    <property type="protein sequence ID" value="AAG07250.1"/>
    <property type="molecule type" value="Genomic_DNA"/>
</dbReference>
<dbReference type="PIR" id="E83163">
    <property type="entry name" value="E83163"/>
</dbReference>
<dbReference type="RefSeq" id="NP_252552.1">
    <property type="nucleotide sequence ID" value="NC_002516.2"/>
</dbReference>
<dbReference type="RefSeq" id="WP_003113780.1">
    <property type="nucleotide sequence ID" value="NZ_QZGE01000001.1"/>
</dbReference>
<dbReference type="PDB" id="3NYC">
    <property type="method" value="X-ray"/>
    <property type="resolution" value="1.06 A"/>
    <property type="chains" value="A=2-375"/>
</dbReference>
<dbReference type="PDB" id="3NYE">
    <property type="method" value="X-ray"/>
    <property type="resolution" value="1.30 A"/>
    <property type="chains" value="A=2-375"/>
</dbReference>
<dbReference type="PDB" id="3NYF">
    <property type="method" value="X-ray"/>
    <property type="resolution" value="1.30 A"/>
    <property type="chains" value="A=2-375"/>
</dbReference>
<dbReference type="PDB" id="3SM8">
    <property type="method" value="X-ray"/>
    <property type="resolution" value="1.07 A"/>
    <property type="chains" value="A=2-375"/>
</dbReference>
<dbReference type="PDB" id="6P9D">
    <property type="method" value="X-ray"/>
    <property type="resolution" value="1.33 A"/>
    <property type="chains" value="A=1-375"/>
</dbReference>
<dbReference type="PDB" id="6PLD">
    <property type="method" value="X-ray"/>
    <property type="resolution" value="1.55 A"/>
    <property type="chains" value="A=1-375"/>
</dbReference>
<dbReference type="PDB" id="7RDF">
    <property type="method" value="X-ray"/>
    <property type="resolution" value="1.29 A"/>
    <property type="chains" value="A=1-375"/>
</dbReference>
<dbReference type="PDBsum" id="3NYC"/>
<dbReference type="PDBsum" id="3NYE"/>
<dbReference type="PDBsum" id="3NYF"/>
<dbReference type="PDBsum" id="3SM8"/>
<dbReference type="PDBsum" id="6P9D"/>
<dbReference type="PDBsum" id="6PLD"/>
<dbReference type="PDBsum" id="7RDF"/>
<dbReference type="SMR" id="Q9HXE3"/>
<dbReference type="STRING" id="208964.PA3863"/>
<dbReference type="PaxDb" id="208964-PA3863"/>
<dbReference type="DNASU" id="879806"/>
<dbReference type="GeneID" id="879806"/>
<dbReference type="KEGG" id="pae:PA3863"/>
<dbReference type="PATRIC" id="fig|208964.12.peg.4045"/>
<dbReference type="PseudoCAP" id="PA3863"/>
<dbReference type="HOGENOM" id="CLU_007884_4_2_6"/>
<dbReference type="InParanoid" id="Q9HXE3"/>
<dbReference type="OrthoDB" id="9806257at2"/>
<dbReference type="PhylomeDB" id="Q9HXE3"/>
<dbReference type="BioCyc" id="MetaCyc:MONOMER-11563"/>
<dbReference type="BioCyc" id="PAER208964:G1FZ6-3934-MONOMER"/>
<dbReference type="BRENDA" id="1.4.99.6">
    <property type="organism ID" value="5087"/>
</dbReference>
<dbReference type="EvolutionaryTrace" id="Q9HXE3"/>
<dbReference type="Proteomes" id="UP000002438">
    <property type="component" value="Chromosome"/>
</dbReference>
<dbReference type="GO" id="GO:0005737">
    <property type="term" value="C:cytoplasm"/>
    <property type="evidence" value="ECO:0000318"/>
    <property type="project" value="GO_Central"/>
</dbReference>
<dbReference type="GO" id="GO:0008718">
    <property type="term" value="F:D-amino-acid dehydrogenase activity"/>
    <property type="evidence" value="ECO:0000314"/>
    <property type="project" value="UniProtKB"/>
</dbReference>
<dbReference type="GO" id="GO:0000166">
    <property type="term" value="F:nucleotide binding"/>
    <property type="evidence" value="ECO:0007669"/>
    <property type="project" value="UniProtKB-KW"/>
</dbReference>
<dbReference type="GO" id="GO:0006527">
    <property type="term" value="P:arginine catabolic process"/>
    <property type="evidence" value="ECO:0000314"/>
    <property type="project" value="UniProtKB"/>
</dbReference>
<dbReference type="GO" id="GO:0006525">
    <property type="term" value="P:arginine metabolic process"/>
    <property type="evidence" value="ECO:0000314"/>
    <property type="project" value="UniProtKB"/>
</dbReference>
<dbReference type="Gene3D" id="3.30.9.10">
    <property type="entry name" value="D-Amino Acid Oxidase, subunit A, domain 2"/>
    <property type="match status" value="1"/>
</dbReference>
<dbReference type="Gene3D" id="3.50.50.60">
    <property type="entry name" value="FAD/NAD(P)-binding domain"/>
    <property type="match status" value="1"/>
</dbReference>
<dbReference type="InterPro" id="IPR006076">
    <property type="entry name" value="FAD-dep_OxRdtase"/>
</dbReference>
<dbReference type="InterPro" id="IPR036188">
    <property type="entry name" value="FAD/NAD-bd_sf"/>
</dbReference>
<dbReference type="PANTHER" id="PTHR13847:SF287">
    <property type="entry name" value="FAD-DEPENDENT OXIDOREDUCTASE DOMAIN-CONTAINING PROTEIN 1"/>
    <property type="match status" value="1"/>
</dbReference>
<dbReference type="PANTHER" id="PTHR13847">
    <property type="entry name" value="SARCOSINE DEHYDROGENASE-RELATED"/>
    <property type="match status" value="1"/>
</dbReference>
<dbReference type="Pfam" id="PF01266">
    <property type="entry name" value="DAO"/>
    <property type="match status" value="1"/>
</dbReference>
<dbReference type="SUPFAM" id="SSF51905">
    <property type="entry name" value="FAD/NAD(P)-binding domain"/>
    <property type="match status" value="1"/>
</dbReference>
<organism>
    <name type="scientific">Pseudomonas aeruginosa (strain ATCC 15692 / DSM 22644 / CIP 104116 / JCM 14847 / LMG 12228 / 1C / PRS 101 / PAO1)</name>
    <dbReference type="NCBI Taxonomy" id="208964"/>
    <lineage>
        <taxon>Bacteria</taxon>
        <taxon>Pseudomonadati</taxon>
        <taxon>Pseudomonadota</taxon>
        <taxon>Gammaproteobacteria</taxon>
        <taxon>Pseudomonadales</taxon>
        <taxon>Pseudomonadaceae</taxon>
        <taxon>Pseudomonas</taxon>
    </lineage>
</organism>
<name>DAUA_PSEAE</name>
<gene>
    <name evidence="7" type="primary">dauA</name>
    <name type="ordered locus">PA3863</name>
</gene>
<keyword id="KW-0002">3D-structure</keyword>
<keyword id="KW-0274">FAD</keyword>
<keyword id="KW-0285">Flavoprotein</keyword>
<keyword id="KW-0547">Nucleotide-binding</keyword>
<keyword id="KW-0560">Oxidoreductase</keyword>
<keyword id="KW-1185">Reference proteome</keyword>
<keyword id="KW-0843">Virulence</keyword>